<keyword id="KW-0002">3D-structure</keyword>
<keyword id="KW-0963">Cytoplasm</keyword>
<keyword id="KW-0488">Methylation</keyword>
<keyword id="KW-0507">mRNA processing</keyword>
<keyword id="KW-0508">mRNA splicing</keyword>
<keyword id="KW-0539">Nucleus</keyword>
<keyword id="KW-0597">Phosphoprotein</keyword>
<keyword id="KW-1185">Reference proteome</keyword>
<keyword id="KW-0687">Ribonucleoprotein</keyword>
<keyword id="KW-0694">RNA-binding</keyword>
<keyword id="KW-0698">rRNA processing</keyword>
<keyword id="KW-0747">Spliceosome</keyword>
<keyword id="KW-0819">tRNA processing</keyword>
<accession>P40070</accession>
<accession>D3DM18</accession>
<accession>Q07091</accession>
<name>LSM4_YEAST</name>
<comment type="function">
    <text evidence="3 5 6 7 8 11 12 14 15 17 18">Component of LSm protein complexes, which are involved in RNA processing and may function in a chaperone-like manner (PubMed:10747033, PubMed:12077351, PubMed:12438310, PubMed:24513854). Component of the cytoplasmic LSM1-LSM7 complex which is involved in mRNA degradation by activating the decapping step (PubMed:10747033, PubMed:10761922, PubMed:24513854). Together with PAT1, the LSM1-LSM7 complex binds to osmotic stress-activated mRNAs to attenuate the osmotic stress response, probably by limiting ribosome access to the mRNA and consequently translation (PubMed:30059503). Component of the nuclear LSM2-LSM8 complex, which is involved in spliceosome assembly (PubMed:10747033, PubMed:12077351, PubMed:12438310). The LSM2-LSM8 complex plays a role in the biogenesis of the spliceosomal U4/U6-U5 tri-snRNP complex by accelerating PRP24-mediated annealing of U4/U6 di-snRNA (PubMed:10747033, PubMed:24240276, PubMed:29717126). The LSM2-LSM8 complex binds U6 snRNA terminating with a non-cyclic 3' phosphate group (PubMed:29717126). LSM2-LSM8 is probably also involved in degradation of nuclear pre-mRNA by targeting them for decapping (PubMed:15485930). LSM2-LSM8 could be involved in processing of pre-tRNAs, pre-rRNAs and U3 snoRNA, although involvement may be indirect (PubMed:12077351, PubMed:12438310, PubMed:15075370). In a complex that probably contains LSM2-LSM7, but not LSM1 or LSM8, associates with the precursor of the RNA component of RNase P (pre-P RNA) and may be involved in maturing pre-P RNA; the complex also associates with snoRNA SNR5 (PubMed:10369684, PubMed:15075370).</text>
</comment>
<comment type="subunit">
    <text evidence="3 4 5 11 13 14 15 17">Component of the heptameric LSM1-LSM7 complex that forms a seven-membered ring structure with a donut shape (PubMed:10747033, PubMed:24139796, PubMed:24513854). The LSm subunits are arranged in the order LSM1, LSM2, LSM3, LSM6, LSM5, LSM7 and LSM4 (PubMed:24139796). Except for LSM1, where a C-terminal helix crosses the ring structure to form additional interactions with LSM3 and LSM6, each subunit interacts only with its two neighboring subunits (PubMed:24139796). The LSM1-LSM7 complex interacts with PAT1; within the complex PAT1 has direct interactions with LSM2 and LSM3 (PubMed:10747033, PubMed:10761922, PubMed:24139796). The LSM1-LSM7 complex interacts with XRN1 (PubMed:10747033). Component of the heptameric LSM2-LSM8 complex that forms a seven-membered ring structure with a donut shape; an RNA strand can pass through the hole in the center of the ring structure (PubMed:10369684, PubMed:10747033, PubMed:24240276, PubMed:29717126). The LSm subunits are arranged in the order LSM8, LSM2, LSM3, LSM6, LSM5, LSM7 and LSM4 (PubMed:24240276). Component of the spliceosome U4/U6-U5 tri-snRNP complex composed of the U4, U6 and U5 snRNAs and at least PRP3, PRP4, PRP6, PRP8, PRP18, PRP31, PRP38, SNU13, SNU23, SNU66, SNU114, SPP381, SMB1, SMD1, SMD2, SMD3, SMX2, SMX3, LSM2, LSM3, LSM4, LSM5, LSM6, LSM7, LSM8, BRR2 and DIB1 (PubMed:10449419, PubMed:24240276). May be found in a complex comprising LSM2-LSM7 without LSM1 or LSM8; the complex associates with pre-P RNA and snoRNA SNR5 (PubMed:10369684, PubMed:15075370).</text>
</comment>
<comment type="interaction">
    <interactant intactId="EBI-188">
        <id>P40070</id>
    </interactant>
    <interactant intactId="EBI-158">
        <id>P39517</id>
        <label>DHH1</label>
    </interactant>
    <organismsDiffer>false</organismsDiffer>
    <experiments>3</experiments>
</comment>
<comment type="interaction">
    <interactant intactId="EBI-188">
        <id>P40070</id>
    </interactant>
    <interactant intactId="EBI-174">
        <id>P47017</id>
        <label>LSM1</label>
    </interactant>
    <organismsDiffer>false</organismsDiffer>
    <experiments>5</experiments>
</comment>
<comment type="interaction">
    <interactant intactId="EBI-188">
        <id>P40070</id>
    </interactant>
    <interactant intactId="EBI-180">
        <id>P38203</id>
        <label>LSM2</label>
    </interactant>
    <organismsDiffer>false</organismsDiffer>
    <experiments>7</experiments>
</comment>
<comment type="interaction">
    <interactant intactId="EBI-188">
        <id>P40070</id>
    </interactant>
    <interactant intactId="EBI-10227">
        <id>P57743</id>
        <label>LSM3</label>
    </interactant>
    <organismsDiffer>false</organismsDiffer>
    <experiments>4</experiments>
</comment>
<comment type="interaction">
    <interactant intactId="EBI-188">
        <id>P40070</id>
    </interactant>
    <interactant intactId="EBI-10236">
        <id>P40089</id>
        <label>LSM5</label>
    </interactant>
    <organismsDiffer>false</organismsDiffer>
    <experiments>3</experiments>
</comment>
<comment type="interaction">
    <interactant intactId="EBI-188">
        <id>P40070</id>
    </interactant>
    <interactant intactId="EBI-196">
        <id>Q06406</id>
        <label>LSM6</label>
    </interactant>
    <organismsDiffer>false</organismsDiffer>
    <experiments>6</experiments>
</comment>
<comment type="interaction">
    <interactant intactId="EBI-188">
        <id>P40070</id>
    </interactant>
    <interactant intactId="EBI-141">
        <id>P53905</id>
        <label>LSM7</label>
    </interactant>
    <organismsDiffer>false</organismsDiffer>
    <experiments>3</experiments>
</comment>
<comment type="interaction">
    <interactant intactId="EBI-188">
        <id>P40070</id>
    </interactant>
    <interactant intactId="EBI-313">
        <id>P47093</id>
        <label>LSM8</label>
    </interactant>
    <organismsDiffer>false</organismsDiffer>
    <experiments>4</experiments>
</comment>
<comment type="interaction">
    <interactant intactId="EBI-188">
        <id>P40070</id>
    </interactant>
    <interactant intactId="EBI-204">
        <id>P25644</id>
        <label>PAT1</label>
    </interactant>
    <organismsDiffer>false</organismsDiffer>
    <experiments>8</experiments>
</comment>
<comment type="interaction">
    <interactant intactId="EBI-188">
        <id>P40070</id>
    </interactant>
    <interactant intactId="EBI-235">
        <id>Q06217</id>
        <label>SMD2</label>
    </interactant>
    <organismsDiffer>false</organismsDiffer>
    <experiments>4</experiments>
</comment>
<comment type="interaction">
    <interactant intactId="EBI-188">
        <id>P40070</id>
    </interactant>
    <interactant intactId="EBI-9642">
        <id>P22147</id>
        <label>XRN1</label>
    </interactant>
    <organismsDiffer>false</organismsDiffer>
    <experiments>4</experiments>
</comment>
<comment type="subcellular location">
    <subcellularLocation>
        <location evidence="9 11">Nucleus</location>
    </subcellularLocation>
    <subcellularLocation>
        <location evidence="9 11">Cytoplasm</location>
    </subcellularLocation>
</comment>
<comment type="miscellaneous">
    <text evidence="10">Present with 3440 molecules/cell in log phase SD medium.</text>
</comment>
<comment type="similarity">
    <text evidence="22">Belongs to the snRNP Sm proteins family.</text>
</comment>
<proteinExistence type="evidence at protein level"/>
<sequence>MLPLYLLTNAKGQQMQIELKNGEIIQGILTNVDNWMNLTLSNVTEYSEESAINSEDNAESSKAVKLNEIYIRGTFIKFIKLQDNIIDKVKQQINSNNNSNSNGPGHKRYYNNRDSNNNRGNYNRRNNNNGNSNRRPYSQNRQYNNSNSSNINNSINSINSNNQNMNNGLGGSVQHHFNSSSPQKVEF</sequence>
<evidence type="ECO:0000255" key="1">
    <source>
        <dbReference type="PROSITE-ProRule" id="PRU01346"/>
    </source>
</evidence>
<evidence type="ECO:0000256" key="2">
    <source>
        <dbReference type="SAM" id="MobiDB-lite"/>
    </source>
</evidence>
<evidence type="ECO:0000269" key="3">
    <source>
    </source>
</evidence>
<evidence type="ECO:0000269" key="4">
    <source>
    </source>
</evidence>
<evidence type="ECO:0000269" key="5">
    <source>
    </source>
</evidence>
<evidence type="ECO:0000269" key="6">
    <source>
    </source>
</evidence>
<evidence type="ECO:0000269" key="7">
    <source>
    </source>
</evidence>
<evidence type="ECO:0000269" key="8">
    <source>
    </source>
</evidence>
<evidence type="ECO:0000269" key="9">
    <source>
    </source>
</evidence>
<evidence type="ECO:0000269" key="10">
    <source>
    </source>
</evidence>
<evidence type="ECO:0000269" key="11">
    <source>
    </source>
</evidence>
<evidence type="ECO:0000269" key="12">
    <source>
    </source>
</evidence>
<evidence type="ECO:0000269" key="13">
    <source>
    </source>
</evidence>
<evidence type="ECO:0000269" key="14">
    <source>
    </source>
</evidence>
<evidence type="ECO:0000269" key="15">
    <source>
    </source>
</evidence>
<evidence type="ECO:0000269" key="16">
    <source>
    </source>
</evidence>
<evidence type="ECO:0000269" key="17">
    <source>
    </source>
</evidence>
<evidence type="ECO:0000269" key="18">
    <source>
    </source>
</evidence>
<evidence type="ECO:0000269" key="19">
    <source>
    </source>
</evidence>
<evidence type="ECO:0000303" key="20">
    <source>
    </source>
</evidence>
<evidence type="ECO:0000303" key="21">
    <source>
    </source>
</evidence>
<evidence type="ECO:0000305" key="22"/>
<evidence type="ECO:0007744" key="23">
    <source>
        <dbReference type="PDB" id="5VSU"/>
    </source>
</evidence>
<evidence type="ECO:0007744" key="24">
    <source>
        <dbReference type="PDB" id="6ASO"/>
    </source>
</evidence>
<evidence type="ECO:0007829" key="25">
    <source>
        <dbReference type="PDB" id="4C92"/>
    </source>
</evidence>
<evidence type="ECO:0007829" key="26">
    <source>
        <dbReference type="PDB" id="4M7D"/>
    </source>
</evidence>
<evidence type="ECO:0007829" key="27">
    <source>
        <dbReference type="PDB" id="6ASO"/>
    </source>
</evidence>
<dbReference type="EMBL" id="X82649">
    <property type="protein sequence ID" value="CAA57975.1"/>
    <property type="molecule type" value="Genomic_DNA"/>
</dbReference>
<dbReference type="EMBL" id="M97918">
    <property type="protein sequence ID" value="AAA58257.1"/>
    <property type="molecule type" value="Genomic_DNA"/>
</dbReference>
<dbReference type="EMBL" id="U18916">
    <property type="protein sequence ID" value="AAC03210.1"/>
    <property type="molecule type" value="Genomic_DNA"/>
</dbReference>
<dbReference type="EMBL" id="BK006939">
    <property type="protein sequence ID" value="DAA07772.1"/>
    <property type="molecule type" value="Genomic_DNA"/>
</dbReference>
<dbReference type="PIR" id="S50615">
    <property type="entry name" value="S50615"/>
</dbReference>
<dbReference type="RefSeq" id="NP_011037.3">
    <property type="nucleotide sequence ID" value="NM_001179002.3"/>
</dbReference>
<dbReference type="PDB" id="3JCM">
    <property type="method" value="EM"/>
    <property type="resolution" value="3.80 A"/>
    <property type="chains" value="h=1-187"/>
</dbReference>
<dbReference type="PDB" id="4C8Q">
    <property type="method" value="X-ray"/>
    <property type="resolution" value="3.70 A"/>
    <property type="chains" value="D=1-114"/>
</dbReference>
<dbReference type="PDB" id="4C92">
    <property type="method" value="X-ray"/>
    <property type="resolution" value="2.30 A"/>
    <property type="chains" value="D=1-114"/>
</dbReference>
<dbReference type="PDB" id="4M75">
    <property type="method" value="X-ray"/>
    <property type="resolution" value="2.95 A"/>
    <property type="chains" value="G/N=1-93"/>
</dbReference>
<dbReference type="PDB" id="4M77">
    <property type="method" value="X-ray"/>
    <property type="resolution" value="3.11 A"/>
    <property type="chains" value="G/N=1-93"/>
</dbReference>
<dbReference type="PDB" id="4M78">
    <property type="method" value="X-ray"/>
    <property type="resolution" value="2.79 A"/>
    <property type="chains" value="G/N=1-93"/>
</dbReference>
<dbReference type="PDB" id="4M7A">
    <property type="method" value="X-ray"/>
    <property type="resolution" value="2.78 A"/>
    <property type="chains" value="G/N=1-93"/>
</dbReference>
<dbReference type="PDB" id="4M7D">
    <property type="method" value="X-ray"/>
    <property type="resolution" value="2.60 A"/>
    <property type="chains" value="G/N=1-93"/>
</dbReference>
<dbReference type="PDB" id="5GAN">
    <property type="method" value="EM"/>
    <property type="resolution" value="3.60 A"/>
    <property type="chains" value="4=1-187"/>
</dbReference>
<dbReference type="PDB" id="5NRL">
    <property type="method" value="EM"/>
    <property type="resolution" value="7.20 A"/>
    <property type="chains" value="j=1-187"/>
</dbReference>
<dbReference type="PDB" id="5VSU">
    <property type="method" value="X-ray"/>
    <property type="resolution" value="3.10 A"/>
    <property type="chains" value="D=1-93"/>
</dbReference>
<dbReference type="PDB" id="5ZWM">
    <property type="method" value="EM"/>
    <property type="resolution" value="3.40 A"/>
    <property type="chains" value="s=1-187"/>
</dbReference>
<dbReference type="PDB" id="5ZWO">
    <property type="method" value="EM"/>
    <property type="resolution" value="3.90 A"/>
    <property type="chains" value="s=1-187"/>
</dbReference>
<dbReference type="PDB" id="6ASO">
    <property type="method" value="X-ray"/>
    <property type="resolution" value="2.71 A"/>
    <property type="chains" value="D=1-93"/>
</dbReference>
<dbReference type="PDBsum" id="3JCM"/>
<dbReference type="PDBsum" id="4C8Q"/>
<dbReference type="PDBsum" id="4C92"/>
<dbReference type="PDBsum" id="4M75"/>
<dbReference type="PDBsum" id="4M77"/>
<dbReference type="PDBsum" id="4M78"/>
<dbReference type="PDBsum" id="4M7A"/>
<dbReference type="PDBsum" id="4M7D"/>
<dbReference type="PDBsum" id="5GAN"/>
<dbReference type="PDBsum" id="5NRL"/>
<dbReference type="PDBsum" id="5VSU"/>
<dbReference type="PDBsum" id="5ZWM"/>
<dbReference type="PDBsum" id="5ZWO"/>
<dbReference type="PDBsum" id="6ASO"/>
<dbReference type="EMDB" id="EMD-3683"/>
<dbReference type="EMDB" id="EMD-6972"/>
<dbReference type="EMDB" id="EMD-6974"/>
<dbReference type="EMDB" id="EMD-8012"/>
<dbReference type="SMR" id="P40070"/>
<dbReference type="BioGRID" id="36857">
    <property type="interactions" value="256"/>
</dbReference>
<dbReference type="ComplexPortal" id="CPX-112">
    <property type="entry name" value="LSM1-7-PAT1 complex"/>
</dbReference>
<dbReference type="ComplexPortal" id="CPX-24">
    <property type="entry name" value="U6 small nuclear ribonucleoprotein complex"/>
</dbReference>
<dbReference type="ComplexPortal" id="CPX-25">
    <property type="entry name" value="U4/U6.U5 tri-small nuclear ribonucleoprotein complex"/>
</dbReference>
<dbReference type="ComplexPortal" id="CPX-32">
    <property type="entry name" value="U4/U6 small nuclear ribonucleoprotein complex"/>
</dbReference>
<dbReference type="ComplexPortal" id="CPX-44">
    <property type="entry name" value="LSM2-8 complex"/>
</dbReference>
<dbReference type="ComplexPortal" id="CPX-45">
    <property type="entry name" value="LSM1-7 complex"/>
</dbReference>
<dbReference type="ComplexPortal" id="CPX-46">
    <property type="entry name" value="LSM2-7 complex"/>
</dbReference>
<dbReference type="DIP" id="DIP-848N"/>
<dbReference type="FunCoup" id="P40070">
    <property type="interactions" value="350"/>
</dbReference>
<dbReference type="IntAct" id="P40070">
    <property type="interactions" value="136"/>
</dbReference>
<dbReference type="MINT" id="P40070"/>
<dbReference type="STRING" id="4932.YER112W"/>
<dbReference type="iPTMnet" id="P40070"/>
<dbReference type="PaxDb" id="4932-YER112W"/>
<dbReference type="PeptideAtlas" id="P40070"/>
<dbReference type="EnsemblFungi" id="YER112W_mRNA">
    <property type="protein sequence ID" value="YER112W"/>
    <property type="gene ID" value="YER112W"/>
</dbReference>
<dbReference type="GeneID" id="856848"/>
<dbReference type="KEGG" id="sce:YER112W"/>
<dbReference type="AGR" id="SGD:S000000914"/>
<dbReference type="SGD" id="S000000914">
    <property type="gene designation" value="LSM4"/>
</dbReference>
<dbReference type="VEuPathDB" id="FungiDB:YER112W"/>
<dbReference type="eggNOG" id="KOG3293">
    <property type="taxonomic scope" value="Eukaryota"/>
</dbReference>
<dbReference type="GeneTree" id="ENSGT00610000086173"/>
<dbReference type="HOGENOM" id="CLU_099537_0_0_1"/>
<dbReference type="InParanoid" id="P40070"/>
<dbReference type="OMA" id="VACDAWM"/>
<dbReference type="OrthoDB" id="747253at2759"/>
<dbReference type="BioCyc" id="YEAST:G3O-30276-MONOMER"/>
<dbReference type="Reactome" id="R-SCE-430039">
    <property type="pathway name" value="mRNA decay by 5' to 3' exoribonuclease"/>
</dbReference>
<dbReference type="BioGRID-ORCS" id="856848">
    <property type="hits" value="0 hits in 10 CRISPR screens"/>
</dbReference>
<dbReference type="CD-CODE" id="2F09078B">
    <property type="entry name" value="Synthetic Condensate 000024"/>
</dbReference>
<dbReference type="CD-CODE" id="6D84B01C">
    <property type="entry name" value="Synthetic Condensate 000001"/>
</dbReference>
<dbReference type="CD-CODE" id="99286EFB">
    <property type="entry name" value="Synthetic Condensate 000038"/>
</dbReference>
<dbReference type="CD-CODE" id="A777E0F8">
    <property type="entry name" value="P-body"/>
</dbReference>
<dbReference type="CD-CODE" id="E03F929F">
    <property type="entry name" value="Stress granule"/>
</dbReference>
<dbReference type="CD-CODE" id="FF78ADB9">
    <property type="entry name" value="Synthetic Condensate 000050"/>
</dbReference>
<dbReference type="EvolutionaryTrace" id="P40070"/>
<dbReference type="PRO" id="PR:P40070"/>
<dbReference type="Proteomes" id="UP000002311">
    <property type="component" value="Chromosome V"/>
</dbReference>
<dbReference type="RNAct" id="P40070">
    <property type="molecule type" value="protein"/>
</dbReference>
<dbReference type="GO" id="GO:0005737">
    <property type="term" value="C:cytoplasm"/>
    <property type="evidence" value="ECO:0007005"/>
    <property type="project" value="SGD"/>
</dbReference>
<dbReference type="GO" id="GO:1990726">
    <property type="term" value="C:Lsm1-7-Pat1 complex"/>
    <property type="evidence" value="ECO:0000314"/>
    <property type="project" value="SGD"/>
</dbReference>
<dbReference type="GO" id="GO:0005730">
    <property type="term" value="C:nucleolus"/>
    <property type="evidence" value="ECO:0000314"/>
    <property type="project" value="ComplexPortal"/>
</dbReference>
<dbReference type="GO" id="GO:0005634">
    <property type="term" value="C:nucleus"/>
    <property type="evidence" value="ECO:0000314"/>
    <property type="project" value="ComplexPortal"/>
</dbReference>
<dbReference type="GO" id="GO:0000932">
    <property type="term" value="C:P-body"/>
    <property type="evidence" value="ECO:0000314"/>
    <property type="project" value="ComplexPortal"/>
</dbReference>
<dbReference type="GO" id="GO:0005732">
    <property type="term" value="C:sno(s)RNA-containing ribonucleoprotein complex"/>
    <property type="evidence" value="ECO:0000353"/>
    <property type="project" value="SGD"/>
</dbReference>
<dbReference type="GO" id="GO:0005681">
    <property type="term" value="C:spliceosomal complex"/>
    <property type="evidence" value="ECO:0000303"/>
    <property type="project" value="ComplexPortal"/>
</dbReference>
<dbReference type="GO" id="GO:0097526">
    <property type="term" value="C:spliceosomal tri-snRNP complex"/>
    <property type="evidence" value="ECO:0000318"/>
    <property type="project" value="GO_Central"/>
</dbReference>
<dbReference type="GO" id="GO:0071001">
    <property type="term" value="C:U4/U6 snRNP"/>
    <property type="evidence" value="ECO:0000303"/>
    <property type="project" value="ComplexPortal"/>
</dbReference>
<dbReference type="GO" id="GO:0046540">
    <property type="term" value="C:U4/U6 x U5 tri-snRNP complex"/>
    <property type="evidence" value="ECO:0000314"/>
    <property type="project" value="SGD"/>
</dbReference>
<dbReference type="GO" id="GO:0005688">
    <property type="term" value="C:U6 snRNP"/>
    <property type="evidence" value="ECO:0000314"/>
    <property type="project" value="ComplexPortal"/>
</dbReference>
<dbReference type="GO" id="GO:0017070">
    <property type="term" value="F:U6 snRNA binding"/>
    <property type="evidence" value="ECO:0000314"/>
    <property type="project" value="SGD"/>
</dbReference>
<dbReference type="GO" id="GO:0042149">
    <property type="term" value="P:cellular response to glucose starvation"/>
    <property type="evidence" value="ECO:0000315"/>
    <property type="project" value="SGD"/>
</dbReference>
<dbReference type="GO" id="GO:0000290">
    <property type="term" value="P:deadenylation-dependent decapping of nuclear-transcribed mRNA"/>
    <property type="evidence" value="ECO:0000315"/>
    <property type="project" value="ComplexPortal"/>
</dbReference>
<dbReference type="GO" id="GO:0000398">
    <property type="term" value="P:mRNA splicing, via spliceosome"/>
    <property type="evidence" value="ECO:0000315"/>
    <property type="project" value="SGD"/>
</dbReference>
<dbReference type="GO" id="GO:0033962">
    <property type="term" value="P:P-body assembly"/>
    <property type="evidence" value="ECO:0000315"/>
    <property type="project" value="SGD"/>
</dbReference>
<dbReference type="GO" id="GO:0006364">
    <property type="term" value="P:rRNA processing"/>
    <property type="evidence" value="ECO:0000315"/>
    <property type="project" value="ComplexPortal"/>
</dbReference>
<dbReference type="GO" id="GO:0000387">
    <property type="term" value="P:spliceosomal snRNP assembly"/>
    <property type="evidence" value="ECO:0000318"/>
    <property type="project" value="GO_Central"/>
</dbReference>
<dbReference type="GO" id="GO:0008033">
    <property type="term" value="P:tRNA processing"/>
    <property type="evidence" value="ECO:0000315"/>
    <property type="project" value="ComplexPortal"/>
</dbReference>
<dbReference type="CDD" id="cd01723">
    <property type="entry name" value="LSm4"/>
    <property type="match status" value="1"/>
</dbReference>
<dbReference type="FunFam" id="2.30.30.100:FF:000064">
    <property type="entry name" value="U6 snRNA-associated Sm-like protein LSm4"/>
    <property type="match status" value="1"/>
</dbReference>
<dbReference type="Gene3D" id="2.30.30.100">
    <property type="match status" value="1"/>
</dbReference>
<dbReference type="InterPro" id="IPR034101">
    <property type="entry name" value="Lsm4"/>
</dbReference>
<dbReference type="InterPro" id="IPR027141">
    <property type="entry name" value="LSm4/Sm_D1/D3"/>
</dbReference>
<dbReference type="InterPro" id="IPR010920">
    <property type="entry name" value="LSM_dom_sf"/>
</dbReference>
<dbReference type="InterPro" id="IPR047575">
    <property type="entry name" value="Sm"/>
</dbReference>
<dbReference type="InterPro" id="IPR001163">
    <property type="entry name" value="Sm_dom_euk/arc"/>
</dbReference>
<dbReference type="PANTHER" id="PTHR23338">
    <property type="entry name" value="SMALL NUCLEAR RIBONUCLEOPROTEIN SM"/>
    <property type="match status" value="1"/>
</dbReference>
<dbReference type="Pfam" id="PF01423">
    <property type="entry name" value="LSM"/>
    <property type="match status" value="1"/>
</dbReference>
<dbReference type="SMART" id="SM00651">
    <property type="entry name" value="Sm"/>
    <property type="match status" value="1"/>
</dbReference>
<dbReference type="SUPFAM" id="SSF50182">
    <property type="entry name" value="Sm-like ribonucleoproteins"/>
    <property type="match status" value="1"/>
</dbReference>
<dbReference type="PROSITE" id="PS52002">
    <property type="entry name" value="SM"/>
    <property type="match status" value="1"/>
</dbReference>
<reference key="1">
    <citation type="journal article" date="1995" name="EMBO J.">
        <title>Identification and characterization of Uss1p (Sdb23p): a novel U6 snRNA-associated protein with significant similarity to core proteins of small nuclear ribonucleoproteins.</title>
        <authorList>
            <person name="Cooper M."/>
            <person name="Johnston L.H."/>
            <person name="Beggs J.D."/>
        </authorList>
    </citation>
    <scope>NUCLEOTIDE SEQUENCE [GENOMIC DNA]</scope>
    <scope>CHARACTERIZATION</scope>
</reference>
<reference key="2">
    <citation type="journal article" date="1993" name="Mol. Biol. Cell">
        <title>Multiple SWI6-dependent cis-acting elements control SWI4 transcription through the cell cycle.</title>
        <authorList>
            <person name="Foster R."/>
            <person name="Mikesell G.E."/>
            <person name="Breeden L."/>
        </authorList>
    </citation>
    <scope>NUCLEOTIDE SEQUENCE [GENOMIC DNA]</scope>
</reference>
<reference key="3">
    <citation type="journal article" date="1997" name="Nature">
        <title>The nucleotide sequence of Saccharomyces cerevisiae chromosome V.</title>
        <authorList>
            <person name="Dietrich F.S."/>
            <person name="Mulligan J.T."/>
            <person name="Hennessy K.M."/>
            <person name="Yelton M.A."/>
            <person name="Allen E."/>
            <person name="Araujo R."/>
            <person name="Aviles E."/>
            <person name="Berno A."/>
            <person name="Brennan T."/>
            <person name="Carpenter J."/>
            <person name="Chen E."/>
            <person name="Cherry J.M."/>
            <person name="Chung E."/>
            <person name="Duncan M."/>
            <person name="Guzman E."/>
            <person name="Hartzell G."/>
            <person name="Hunicke-Smith S."/>
            <person name="Hyman R.W."/>
            <person name="Kayser A."/>
            <person name="Komp C."/>
            <person name="Lashkari D."/>
            <person name="Lew H."/>
            <person name="Lin D."/>
            <person name="Mosedale D."/>
            <person name="Nakahara K."/>
            <person name="Namath A."/>
            <person name="Norgren R."/>
            <person name="Oefner P."/>
            <person name="Oh C."/>
            <person name="Petel F.X."/>
            <person name="Roberts D."/>
            <person name="Sehl P."/>
            <person name="Schramm S."/>
            <person name="Shogren T."/>
            <person name="Smith V."/>
            <person name="Taylor P."/>
            <person name="Wei Y."/>
            <person name="Botstein D."/>
            <person name="Davis R.W."/>
        </authorList>
    </citation>
    <scope>NUCLEOTIDE SEQUENCE [LARGE SCALE GENOMIC DNA]</scope>
    <source>
        <strain>ATCC 204508 / S288c</strain>
    </source>
</reference>
<reference key="4">
    <citation type="journal article" date="2014" name="G3 (Bethesda)">
        <title>The reference genome sequence of Saccharomyces cerevisiae: Then and now.</title>
        <authorList>
            <person name="Engel S.R."/>
            <person name="Dietrich F.S."/>
            <person name="Fisk D.G."/>
            <person name="Binkley G."/>
            <person name="Balakrishnan R."/>
            <person name="Costanzo M.C."/>
            <person name="Dwight S.S."/>
            <person name="Hitz B.C."/>
            <person name="Karra K."/>
            <person name="Nash R.S."/>
            <person name="Weng S."/>
            <person name="Wong E.D."/>
            <person name="Lloyd P."/>
            <person name="Skrzypek M.S."/>
            <person name="Miyasato S.R."/>
            <person name="Simison M."/>
            <person name="Cherry J.M."/>
        </authorList>
    </citation>
    <scope>GENOME REANNOTATION</scope>
    <source>
        <strain>ATCC 204508 / S288c</strain>
    </source>
</reference>
<reference key="5">
    <citation type="journal article" date="1999" name="EMBO J.">
        <title>Sm and Sm-like proteins assemble in two related complexes of deep evolutionary origin.</title>
        <authorList>
            <person name="Salgado-Garrido J."/>
            <person name="Bragado-Nilsson E."/>
            <person name="Kandels-Lewis S."/>
            <person name="Seraphin B."/>
        </authorList>
    </citation>
    <scope>FUNCTION</scope>
    <scope>IDENTIFICATION IN THE LSM2-LSM8 COMPLEX</scope>
    <scope>ASSOCIATION WITH PRE-P RNA</scope>
</reference>
<reference key="6">
    <citation type="journal article" date="1999" name="EMBO J.">
        <title>Characterization of Sm-like proteins in yeast and their association with U6 snRNA.</title>
        <authorList>
            <person name="Mayes A.E."/>
            <person name="Verdone L."/>
            <person name="Legrain P."/>
            <person name="Beggs J.D."/>
        </authorList>
    </citation>
    <scope>CHARACTERIZATION</scope>
</reference>
<reference key="7">
    <citation type="journal article" date="1999" name="EMBO J.">
        <title>Identification by mass spectrometry and functional analysis of novel proteins of the yeast [U4/U6.U5] tri-snRNP.</title>
        <authorList>
            <person name="Gottschalk A."/>
            <person name="Neubauer G."/>
            <person name="Banroques J."/>
            <person name="Mann M."/>
            <person name="Luehrmann R."/>
            <person name="Fabrizio P."/>
        </authorList>
    </citation>
    <scope>SUBUNIT</scope>
    <scope>IDENTIFICATION IN THE U4/U5/U6 TRI-SNRNP COMPLEX</scope>
    <scope>IDENTIFICATION BY MASS SPECTROMETRY</scope>
</reference>
<reference key="8">
    <citation type="journal article" date="2000" name="EMBO J.">
        <title>A Sm-like protein complex that participates in mRNA degradation.</title>
        <authorList>
            <person name="Bouveret E."/>
            <person name="Rigaut G."/>
            <person name="Shevchenko A."/>
            <person name="Wilm M."/>
            <person name="Seraphin B."/>
        </authorList>
    </citation>
    <scope>IDENTIFICATION IN THE LSM1-LSM7 COMPLEX</scope>
    <scope>ASSOCIATION OF THE LSM1-LSM7 COMPLEX WITH PAT1 AND XRN1</scope>
    <scope>FUNCTION OF THE LSM1-LSM7 COMPLEX</scope>
    <scope>IDENTIFICATION IN THE LSM2-LSM8 COMPLEX</scope>
    <scope>ASSOCIATION OF THE LSM2-LSM8 COMPLEX WITH U6 SNRNA</scope>
    <scope>IDENTIFICATION BY MASS SPECTROMETRY</scope>
</reference>
<reference key="9">
    <citation type="journal article" date="2000" name="Nature">
        <title>Yeast Sm-like proteins function in mRNA decapping and decay.</title>
        <authorList>
            <person name="Tharun S."/>
            <person name="He W."/>
            <person name="Mayes A.E."/>
            <person name="Lennertz P."/>
            <person name="Beggs J.D."/>
            <person name="Parker R."/>
        </authorList>
    </citation>
    <scope>FUNCTION OF THE LSM1-LSM7 COMPLEX</scope>
</reference>
<reference key="10">
    <citation type="journal article" date="2002" name="Mol. Cell. Biol.">
        <title>Lsm proteins are required for normal processing of pre-tRNAs and their efficient association with La-homologous protein Lhp1p.</title>
        <authorList>
            <person name="Kufel J."/>
            <person name="Allmang C."/>
            <person name="Verdone L."/>
            <person name="Beggs J.D."/>
            <person name="Tollervey D."/>
        </authorList>
    </citation>
    <scope>FUNCTION IN PROCESSING OF PRE-TRNAS</scope>
</reference>
<reference key="11">
    <citation type="journal article" date="2003" name="Nature">
        <title>Global analysis of protein localization in budding yeast.</title>
        <authorList>
            <person name="Huh W.-K."/>
            <person name="Falvo J.V."/>
            <person name="Gerke L.C."/>
            <person name="Carroll A.S."/>
            <person name="Howson R.W."/>
            <person name="Weissman J.S."/>
            <person name="O'Shea E.K."/>
        </authorList>
    </citation>
    <scope>SUBCELLULAR LOCATION [LARGE SCALE ANALYSIS]</scope>
</reference>
<reference key="12">
    <citation type="journal article" date="2003" name="Nature">
        <title>Global analysis of protein expression in yeast.</title>
        <authorList>
            <person name="Ghaemmaghami S."/>
            <person name="Huh W.-K."/>
            <person name="Bower K."/>
            <person name="Howson R.W."/>
            <person name="Belle A."/>
            <person name="Dephoure N."/>
            <person name="O'Shea E.K."/>
            <person name="Weissman J.S."/>
        </authorList>
    </citation>
    <scope>LEVEL OF PROTEIN EXPRESSION [LARGE SCALE ANALYSIS]</scope>
</reference>
<reference key="13">
    <citation type="journal article" date="2003" name="J. Biol. Chem.">
        <title>Lsm Proteins are required for normal processing and stability of ribosomal RNAs.</title>
        <authorList>
            <person name="Kufel J."/>
            <person name="Allmang C."/>
            <person name="Petfalski E."/>
            <person name="Beggs J.D."/>
            <person name="Tollervey D."/>
        </authorList>
    </citation>
    <scope>FUNCTION IN PROCESSING OF PRE-RRNAS</scope>
</reference>
<reference key="14">
    <citation type="journal article" date="2004" name="Mol. Biol. Cell">
        <title>An Lsm2-Lsm7 complex in Saccharomyces cerevisiae associates with the small nucleolar RNA snR5.</title>
        <authorList>
            <person name="Fernandez C.F."/>
            <person name="Pannone B.K."/>
            <person name="Chen X."/>
            <person name="Fuchs G."/>
            <person name="Wolin S.L."/>
        </authorList>
    </citation>
    <scope>FUNCTION</scope>
    <scope>IDENTIFICATION IN THE LSM2-LSM7 COMPLEX</scope>
    <scope>SUBCELLULAR LOCATION</scope>
</reference>
<reference key="15">
    <citation type="journal article" date="2004" name="Mol. Cell. Biol.">
        <title>Nuclear pre-mRNA decapping and 5' degradation in yeast require the Lsm2-8p complex.</title>
        <authorList>
            <person name="Kufel J."/>
            <person name="Bousquet-Antonelli C."/>
            <person name="Beggs J.D."/>
            <person name="Tollervey D."/>
        </authorList>
    </citation>
    <scope>FUNCTION OF THE LSM2-LSM8 COMPLEX IN NUCLEAR MRNA DEGRADATION</scope>
</reference>
<reference key="16">
    <citation type="journal article" date="2015" name="Proteomics">
        <title>Expanding the yeast protein arginine methylome.</title>
        <authorList>
            <person name="Plank M."/>
            <person name="Fischer R."/>
            <person name="Geoghegan V."/>
            <person name="Charles P.D."/>
            <person name="Konietzny R."/>
            <person name="Acuto O."/>
            <person name="Pears C."/>
            <person name="Schofield C.J."/>
            <person name="Kessler B.M."/>
        </authorList>
    </citation>
    <scope>METHYLATION AT ARG-119</scope>
</reference>
<reference key="17">
    <citation type="journal article" date="2018" name="PLoS Genet.">
        <title>The Lsm1-7/Pat1 complex binds to stress-activated mRNAs and modulates the response to hyperosmotic shock.</title>
        <authorList>
            <person name="Garre E."/>
            <person name="Pelechano V."/>
            <person name="Sanchez Del Pino M."/>
            <person name="Alepuz P."/>
            <person name="Sunnerhagen P."/>
        </authorList>
    </citation>
    <scope>FUNCTION</scope>
</reference>
<reference key="18">
    <citation type="journal article" date="2021" name="J. Proteome Res.">
        <title>Discovery of arginine methylation, phosphorylation, and their co-occurrence in condensate-associated proteins in Saccharomyces cerevisiae.</title>
        <authorList>
            <person name="Hamey J.J."/>
            <person name="Nguyen A."/>
            <person name="Wilkins M.R."/>
        </authorList>
    </citation>
    <scope>PHOSPHORYLATION AT SER-181</scope>
</reference>
<reference key="19">
    <citation type="journal article" date="2013" name="Cell Rep.">
        <title>Architecture of the Lsm1-7-Pat1 complex: a conserved assembly in eukaryotic mRNA turnover.</title>
        <authorList>
            <person name="Sharif H."/>
            <person name="Conti E."/>
        </authorList>
    </citation>
    <scope>X-RAY CRYSTALLOGRAPHY (2.30 ANGSTROMS) OF 1-114 OF LSM1-LSM7 COMPLEX</scope>
    <scope>SUBUNIT</scope>
    <scope>INTERACTION WITH PAT1</scope>
</reference>
<reference key="20">
    <citation type="journal article" date="2014" name="Cell Res.">
        <title>Crystal structure and biochemical analysis of the heptameric Lsm1-7 complex.</title>
        <authorList>
            <person name="Zhou L."/>
            <person name="Zhou Y."/>
            <person name="Hang J."/>
            <person name="Wan R."/>
            <person name="Lu G."/>
            <person name="Yan C."/>
            <person name="Shi Y."/>
        </authorList>
    </citation>
    <scope>X-RAY CRYSTALLOGRAPHY (2.95 ANGSTROMS) OF LSM1-LSM7 COMPLEX</scope>
    <scope>SUBUNIT</scope>
    <scope>FUNCTION</scope>
    <scope>RNA-BINDING</scope>
    <scope>MUTAGENESIS OF ARG-72</scope>
</reference>
<reference key="21">
    <citation type="journal article" date="2014" name="Nature">
        <title>Crystal structures of the Lsm complex bound to the 3' end sequence of U6 small nuclear RNA.</title>
        <authorList>
            <person name="Zhou L."/>
            <person name="Hang J."/>
            <person name="Zhou Y."/>
            <person name="Wan R."/>
            <person name="Lu G."/>
            <person name="Yin P."/>
            <person name="Yan C."/>
            <person name="Shi Y."/>
        </authorList>
    </citation>
    <scope>X-RAY CRYSTALLOGRAPHY (2.60 ANGSTROMS) OF 1-93 OF LSM2-LSM8 COMPLEX</scope>
    <scope>SUBUNIT</scope>
    <scope>FUNCTION</scope>
    <scope>RNA-BINDING</scope>
    <scope>MUTAGENESIS OF ARG-72</scope>
</reference>
<reference evidence="23 24" key="22">
    <citation type="journal article" date="2018" name="Nat. Commun.">
        <title>Architecture of the U6 snRNP reveals specific recognition of 3'-end processed U6 snRNA.</title>
        <authorList>
            <person name="Montemayor E.J."/>
            <person name="Didychuk A.L."/>
            <person name="Yake A.D."/>
            <person name="Sidhu G.K."/>
            <person name="Brow D.A."/>
            <person name="Butcher S.E."/>
        </authorList>
    </citation>
    <scope>X-RAY CRYSTALLOGRAPHY (2.71 ANGSTROMS) OF 1-93 IN COMPLEX WITH SNR6; LSM2; LSM3; PRP24; LSM5; LSM6; LSM7 AND LSM8</scope>
    <scope>FUNCTION</scope>
    <scope>IDENTIFICATION IN THE U4/U6 SNRNP ASSEMBLY</scope>
</reference>
<feature type="chain" id="PRO_0000125571" description="LSM complex subunit LSM4">
    <location>
        <begin position="1"/>
        <end position="187"/>
    </location>
</feature>
<feature type="domain" description="Sm" evidence="1">
    <location>
        <begin position="2"/>
        <end position="85"/>
    </location>
</feature>
<feature type="region of interest" description="Disordered" evidence="2">
    <location>
        <begin position="93"/>
        <end position="187"/>
    </location>
</feature>
<feature type="compositionally biased region" description="Low complexity" evidence="2">
    <location>
        <begin position="112"/>
        <end position="167"/>
    </location>
</feature>
<feature type="compositionally biased region" description="Polar residues" evidence="2">
    <location>
        <begin position="175"/>
        <end position="187"/>
    </location>
</feature>
<feature type="modified residue" description="Omega-N-methylarginine" evidence="16">
    <location>
        <position position="119"/>
    </location>
</feature>
<feature type="modified residue" description="Phosphoserine" evidence="19">
    <location>
        <position position="181"/>
    </location>
</feature>
<feature type="mutagenesis site" description="Slightly reduces affinity for poly-U RNA ends." evidence="14 15">
    <original>R</original>
    <variation>A</variation>
    <location>
        <position position="72"/>
    </location>
</feature>
<feature type="sequence conflict" description="In Ref. 2; AAA58257." evidence="22" ref="2">
    <original>I</original>
    <variation>N</variation>
    <location>
        <position position="155"/>
    </location>
</feature>
<feature type="helix" evidence="25">
    <location>
        <begin position="2"/>
        <end position="8"/>
    </location>
</feature>
<feature type="turn" evidence="27">
    <location>
        <begin position="9"/>
        <end position="12"/>
    </location>
</feature>
<feature type="strand" evidence="25">
    <location>
        <begin position="14"/>
        <end position="19"/>
    </location>
</feature>
<feature type="strand" evidence="25">
    <location>
        <begin position="22"/>
        <end position="32"/>
    </location>
</feature>
<feature type="strand" evidence="25">
    <location>
        <begin position="38"/>
        <end position="47"/>
    </location>
</feature>
<feature type="helix" evidence="25">
    <location>
        <begin position="48"/>
        <end position="53"/>
    </location>
</feature>
<feature type="strand" evidence="25">
    <location>
        <begin position="64"/>
        <end position="71"/>
    </location>
</feature>
<feature type="helix" evidence="25">
    <location>
        <begin position="73"/>
        <end position="75"/>
    </location>
</feature>
<feature type="strand" evidence="25">
    <location>
        <begin position="76"/>
        <end position="81"/>
    </location>
</feature>
<feature type="helix" evidence="26">
    <location>
        <begin position="83"/>
        <end position="86"/>
    </location>
</feature>
<gene>
    <name evidence="20" type="primary">LSM4</name>
    <name type="synonym">SDB23</name>
    <name evidence="21" type="synonym">USS1</name>
    <name type="ordered locus">YER112W</name>
</gene>
<organism>
    <name type="scientific">Saccharomyces cerevisiae (strain ATCC 204508 / S288c)</name>
    <name type="common">Baker's yeast</name>
    <dbReference type="NCBI Taxonomy" id="559292"/>
    <lineage>
        <taxon>Eukaryota</taxon>
        <taxon>Fungi</taxon>
        <taxon>Dikarya</taxon>
        <taxon>Ascomycota</taxon>
        <taxon>Saccharomycotina</taxon>
        <taxon>Saccharomycetes</taxon>
        <taxon>Saccharomycetales</taxon>
        <taxon>Saccharomycetaceae</taxon>
        <taxon>Saccharomyces</taxon>
    </lineage>
</organism>
<protein>
    <recommendedName>
        <fullName evidence="22">LSM complex subunit LSM4</fullName>
    </recommendedName>
    <alternativeName>
        <fullName evidence="20">Like-SM protein 4</fullName>
    </alternativeName>
</protein>